<proteinExistence type="inferred from homology"/>
<accession>Q1BYX2</accession>
<keyword id="KW-0143">Chaperone</keyword>
<keyword id="KW-0963">Cytoplasm</keyword>
<keyword id="KW-0235">DNA replication</keyword>
<keyword id="KW-0479">Metal-binding</keyword>
<keyword id="KW-0677">Repeat</keyword>
<keyword id="KW-0346">Stress response</keyword>
<keyword id="KW-0862">Zinc</keyword>
<keyword id="KW-0863">Zinc-finger</keyword>
<gene>
    <name evidence="1" type="primary">dnaJ</name>
    <name type="ordered locus">Bcen_0269</name>
</gene>
<sequence>MAKRDYYEVLGVAKNASDDEIKKAYRKLAMKYHPDRNPDSKDAEEHFKEAKEAYEMLSDGQKRAAYDQYGHAGVDPNMGGAGAQGFGGFADAFGDIFGDIFGQAAGGAARGGRGGPQVYRGADLRYSMEITLEQAAHGYDTQIRVPSWVSCEVCHGSGAKPGTKPETCPTCHGQGTVRMSQGFFSIQQTCPKCHGTGTYIPEPCAHCHGSGKVKETKTLEVKIPAGIDDGMRIRSAGNGEPGINGGPPGDLYVEIHIKPHSVFERDGDDLHCQMPIPFTTAALGGEIEVPTLAGRASFPVPEGTQSGKTFRLRGKGIKGLRSSIAGDLYVHVQVETPVKLTDQQRDLLKQFEKSLAEGGARHSPQSKSWFDRVKSFFE</sequence>
<name>DNAJ_BURO1</name>
<evidence type="ECO:0000255" key="1">
    <source>
        <dbReference type="HAMAP-Rule" id="MF_01152"/>
    </source>
</evidence>
<reference key="1">
    <citation type="submission" date="2006-05" db="EMBL/GenBank/DDBJ databases">
        <title>Complete sequence of chromosome 1 of Burkholderia cenocepacia AU 1054.</title>
        <authorList>
            <consortium name="US DOE Joint Genome Institute"/>
            <person name="Copeland A."/>
            <person name="Lucas S."/>
            <person name="Lapidus A."/>
            <person name="Barry K."/>
            <person name="Detter J.C."/>
            <person name="Glavina del Rio T."/>
            <person name="Hammon N."/>
            <person name="Israni S."/>
            <person name="Dalin E."/>
            <person name="Tice H."/>
            <person name="Pitluck S."/>
            <person name="Chain P."/>
            <person name="Malfatti S."/>
            <person name="Shin M."/>
            <person name="Vergez L."/>
            <person name="Schmutz J."/>
            <person name="Larimer F."/>
            <person name="Land M."/>
            <person name="Hauser L."/>
            <person name="Kyrpides N."/>
            <person name="Lykidis A."/>
            <person name="LiPuma J.J."/>
            <person name="Konstantinidis K."/>
            <person name="Tiedje J.M."/>
            <person name="Richardson P."/>
        </authorList>
    </citation>
    <scope>NUCLEOTIDE SEQUENCE [LARGE SCALE GENOMIC DNA]</scope>
    <source>
        <strain>AU 1054</strain>
    </source>
</reference>
<organism>
    <name type="scientific">Burkholderia orbicola (strain AU 1054)</name>
    <dbReference type="NCBI Taxonomy" id="331271"/>
    <lineage>
        <taxon>Bacteria</taxon>
        <taxon>Pseudomonadati</taxon>
        <taxon>Pseudomonadota</taxon>
        <taxon>Betaproteobacteria</taxon>
        <taxon>Burkholderiales</taxon>
        <taxon>Burkholderiaceae</taxon>
        <taxon>Burkholderia</taxon>
        <taxon>Burkholderia cepacia complex</taxon>
        <taxon>Burkholderia orbicola</taxon>
    </lineage>
</organism>
<feature type="chain" id="PRO_1000085154" description="Chaperone protein DnaJ">
    <location>
        <begin position="1"/>
        <end position="378"/>
    </location>
</feature>
<feature type="domain" description="J" evidence="1">
    <location>
        <begin position="5"/>
        <end position="70"/>
    </location>
</feature>
<feature type="repeat" description="CXXCXGXG motif">
    <location>
        <begin position="151"/>
        <end position="158"/>
    </location>
</feature>
<feature type="repeat" description="CXXCXGXG motif">
    <location>
        <begin position="168"/>
        <end position="175"/>
    </location>
</feature>
<feature type="repeat" description="CXXCXGXG motif">
    <location>
        <begin position="190"/>
        <end position="197"/>
    </location>
</feature>
<feature type="repeat" description="CXXCXGXG motif">
    <location>
        <begin position="204"/>
        <end position="211"/>
    </location>
</feature>
<feature type="zinc finger region" description="CR-type" evidence="1">
    <location>
        <begin position="138"/>
        <end position="216"/>
    </location>
</feature>
<feature type="binding site" evidence="1">
    <location>
        <position position="151"/>
    </location>
    <ligand>
        <name>Zn(2+)</name>
        <dbReference type="ChEBI" id="CHEBI:29105"/>
        <label>1</label>
    </ligand>
</feature>
<feature type="binding site" evidence="1">
    <location>
        <position position="154"/>
    </location>
    <ligand>
        <name>Zn(2+)</name>
        <dbReference type="ChEBI" id="CHEBI:29105"/>
        <label>1</label>
    </ligand>
</feature>
<feature type="binding site" evidence="1">
    <location>
        <position position="168"/>
    </location>
    <ligand>
        <name>Zn(2+)</name>
        <dbReference type="ChEBI" id="CHEBI:29105"/>
        <label>2</label>
    </ligand>
</feature>
<feature type="binding site" evidence="1">
    <location>
        <position position="171"/>
    </location>
    <ligand>
        <name>Zn(2+)</name>
        <dbReference type="ChEBI" id="CHEBI:29105"/>
        <label>2</label>
    </ligand>
</feature>
<feature type="binding site" evidence="1">
    <location>
        <position position="190"/>
    </location>
    <ligand>
        <name>Zn(2+)</name>
        <dbReference type="ChEBI" id="CHEBI:29105"/>
        <label>2</label>
    </ligand>
</feature>
<feature type="binding site" evidence="1">
    <location>
        <position position="193"/>
    </location>
    <ligand>
        <name>Zn(2+)</name>
        <dbReference type="ChEBI" id="CHEBI:29105"/>
        <label>2</label>
    </ligand>
</feature>
<feature type="binding site" evidence="1">
    <location>
        <position position="204"/>
    </location>
    <ligand>
        <name>Zn(2+)</name>
        <dbReference type="ChEBI" id="CHEBI:29105"/>
        <label>1</label>
    </ligand>
</feature>
<feature type="binding site" evidence="1">
    <location>
        <position position="207"/>
    </location>
    <ligand>
        <name>Zn(2+)</name>
        <dbReference type="ChEBI" id="CHEBI:29105"/>
        <label>1</label>
    </ligand>
</feature>
<protein>
    <recommendedName>
        <fullName evidence="1">Chaperone protein DnaJ</fullName>
    </recommendedName>
</protein>
<dbReference type="EMBL" id="CP000378">
    <property type="protein sequence ID" value="ABF75183.1"/>
    <property type="molecule type" value="Genomic_DNA"/>
</dbReference>
<dbReference type="SMR" id="Q1BYX2"/>
<dbReference type="HOGENOM" id="CLU_017633_0_7_4"/>
<dbReference type="GO" id="GO:0005737">
    <property type="term" value="C:cytoplasm"/>
    <property type="evidence" value="ECO:0007669"/>
    <property type="project" value="UniProtKB-SubCell"/>
</dbReference>
<dbReference type="GO" id="GO:0005524">
    <property type="term" value="F:ATP binding"/>
    <property type="evidence" value="ECO:0007669"/>
    <property type="project" value="InterPro"/>
</dbReference>
<dbReference type="GO" id="GO:0031072">
    <property type="term" value="F:heat shock protein binding"/>
    <property type="evidence" value="ECO:0007669"/>
    <property type="project" value="InterPro"/>
</dbReference>
<dbReference type="GO" id="GO:0051082">
    <property type="term" value="F:unfolded protein binding"/>
    <property type="evidence" value="ECO:0007669"/>
    <property type="project" value="UniProtKB-UniRule"/>
</dbReference>
<dbReference type="GO" id="GO:0008270">
    <property type="term" value="F:zinc ion binding"/>
    <property type="evidence" value="ECO:0007669"/>
    <property type="project" value="UniProtKB-UniRule"/>
</dbReference>
<dbReference type="GO" id="GO:0051085">
    <property type="term" value="P:chaperone cofactor-dependent protein refolding"/>
    <property type="evidence" value="ECO:0007669"/>
    <property type="project" value="TreeGrafter"/>
</dbReference>
<dbReference type="GO" id="GO:0006260">
    <property type="term" value="P:DNA replication"/>
    <property type="evidence" value="ECO:0007669"/>
    <property type="project" value="UniProtKB-KW"/>
</dbReference>
<dbReference type="GO" id="GO:0042026">
    <property type="term" value="P:protein refolding"/>
    <property type="evidence" value="ECO:0007669"/>
    <property type="project" value="TreeGrafter"/>
</dbReference>
<dbReference type="GO" id="GO:0009408">
    <property type="term" value="P:response to heat"/>
    <property type="evidence" value="ECO:0007669"/>
    <property type="project" value="InterPro"/>
</dbReference>
<dbReference type="CDD" id="cd06257">
    <property type="entry name" value="DnaJ"/>
    <property type="match status" value="1"/>
</dbReference>
<dbReference type="CDD" id="cd10747">
    <property type="entry name" value="DnaJ_C"/>
    <property type="match status" value="1"/>
</dbReference>
<dbReference type="CDD" id="cd10719">
    <property type="entry name" value="DnaJ_zf"/>
    <property type="match status" value="1"/>
</dbReference>
<dbReference type="FunFam" id="1.10.287.110:FF:000031">
    <property type="entry name" value="Molecular chaperone DnaJ"/>
    <property type="match status" value="1"/>
</dbReference>
<dbReference type="FunFam" id="2.10.230.10:FF:000002">
    <property type="entry name" value="Molecular chaperone DnaJ"/>
    <property type="match status" value="1"/>
</dbReference>
<dbReference type="FunFam" id="2.60.260.20:FF:000004">
    <property type="entry name" value="Molecular chaperone DnaJ"/>
    <property type="match status" value="1"/>
</dbReference>
<dbReference type="Gene3D" id="1.10.287.110">
    <property type="entry name" value="DnaJ domain"/>
    <property type="match status" value="1"/>
</dbReference>
<dbReference type="Gene3D" id="2.10.230.10">
    <property type="entry name" value="Heat shock protein DnaJ, cysteine-rich domain"/>
    <property type="match status" value="1"/>
</dbReference>
<dbReference type="Gene3D" id="2.60.260.20">
    <property type="entry name" value="Urease metallochaperone UreE, N-terminal domain"/>
    <property type="match status" value="2"/>
</dbReference>
<dbReference type="HAMAP" id="MF_01152">
    <property type="entry name" value="DnaJ"/>
    <property type="match status" value="1"/>
</dbReference>
<dbReference type="InterPro" id="IPR012724">
    <property type="entry name" value="DnaJ"/>
</dbReference>
<dbReference type="InterPro" id="IPR002939">
    <property type="entry name" value="DnaJ_C"/>
</dbReference>
<dbReference type="InterPro" id="IPR001623">
    <property type="entry name" value="DnaJ_domain"/>
</dbReference>
<dbReference type="InterPro" id="IPR018253">
    <property type="entry name" value="DnaJ_domain_CS"/>
</dbReference>
<dbReference type="InterPro" id="IPR008971">
    <property type="entry name" value="HSP40/DnaJ_pept-bd"/>
</dbReference>
<dbReference type="InterPro" id="IPR001305">
    <property type="entry name" value="HSP_DnaJ_Cys-rich_dom"/>
</dbReference>
<dbReference type="InterPro" id="IPR036410">
    <property type="entry name" value="HSP_DnaJ_Cys-rich_dom_sf"/>
</dbReference>
<dbReference type="InterPro" id="IPR036869">
    <property type="entry name" value="J_dom_sf"/>
</dbReference>
<dbReference type="NCBIfam" id="TIGR02349">
    <property type="entry name" value="DnaJ_bact"/>
    <property type="match status" value="1"/>
</dbReference>
<dbReference type="NCBIfam" id="NF008035">
    <property type="entry name" value="PRK10767.1"/>
    <property type="match status" value="1"/>
</dbReference>
<dbReference type="PANTHER" id="PTHR43096:SF48">
    <property type="entry name" value="CHAPERONE PROTEIN DNAJ"/>
    <property type="match status" value="1"/>
</dbReference>
<dbReference type="PANTHER" id="PTHR43096">
    <property type="entry name" value="DNAJ HOMOLOG 1, MITOCHONDRIAL-RELATED"/>
    <property type="match status" value="1"/>
</dbReference>
<dbReference type="Pfam" id="PF00226">
    <property type="entry name" value="DnaJ"/>
    <property type="match status" value="1"/>
</dbReference>
<dbReference type="Pfam" id="PF01556">
    <property type="entry name" value="DnaJ_C"/>
    <property type="match status" value="1"/>
</dbReference>
<dbReference type="Pfam" id="PF00684">
    <property type="entry name" value="DnaJ_CXXCXGXG"/>
    <property type="match status" value="1"/>
</dbReference>
<dbReference type="PRINTS" id="PR00625">
    <property type="entry name" value="JDOMAIN"/>
</dbReference>
<dbReference type="SMART" id="SM00271">
    <property type="entry name" value="DnaJ"/>
    <property type="match status" value="1"/>
</dbReference>
<dbReference type="SUPFAM" id="SSF46565">
    <property type="entry name" value="Chaperone J-domain"/>
    <property type="match status" value="1"/>
</dbReference>
<dbReference type="SUPFAM" id="SSF57938">
    <property type="entry name" value="DnaJ/Hsp40 cysteine-rich domain"/>
    <property type="match status" value="1"/>
</dbReference>
<dbReference type="SUPFAM" id="SSF49493">
    <property type="entry name" value="HSP40/DnaJ peptide-binding domain"/>
    <property type="match status" value="2"/>
</dbReference>
<dbReference type="PROSITE" id="PS00636">
    <property type="entry name" value="DNAJ_1"/>
    <property type="match status" value="1"/>
</dbReference>
<dbReference type="PROSITE" id="PS50076">
    <property type="entry name" value="DNAJ_2"/>
    <property type="match status" value="1"/>
</dbReference>
<dbReference type="PROSITE" id="PS51188">
    <property type="entry name" value="ZF_CR"/>
    <property type="match status" value="1"/>
</dbReference>
<comment type="function">
    <text evidence="1">Participates actively in the response to hyperosmotic and heat shock by preventing the aggregation of stress-denatured proteins and by disaggregating proteins, also in an autonomous, DnaK-independent fashion. Unfolded proteins bind initially to DnaJ; upon interaction with the DnaJ-bound protein, DnaK hydrolyzes its bound ATP, resulting in the formation of a stable complex. GrpE releases ADP from DnaK; ATP binding to DnaK triggers the release of the substrate protein, thus completing the reaction cycle. Several rounds of ATP-dependent interactions between DnaJ, DnaK and GrpE are required for fully efficient folding. Also involved, together with DnaK and GrpE, in the DNA replication of plasmids through activation of initiation proteins.</text>
</comment>
<comment type="cofactor">
    <cofactor evidence="1">
        <name>Zn(2+)</name>
        <dbReference type="ChEBI" id="CHEBI:29105"/>
    </cofactor>
    <text evidence="1">Binds 2 Zn(2+) ions per monomer.</text>
</comment>
<comment type="subunit">
    <text evidence="1">Homodimer.</text>
</comment>
<comment type="subcellular location">
    <subcellularLocation>
        <location evidence="1">Cytoplasm</location>
    </subcellularLocation>
</comment>
<comment type="domain">
    <text evidence="1">The J domain is necessary and sufficient to stimulate DnaK ATPase activity. Zinc center 1 plays an important role in the autonomous, DnaK-independent chaperone activity of DnaJ. Zinc center 2 is essential for interaction with DnaK and for DnaJ activity.</text>
</comment>
<comment type="similarity">
    <text evidence="1">Belongs to the DnaJ family.</text>
</comment>